<proteinExistence type="inferred from homology"/>
<accession>C5A241</accession>
<feature type="chain" id="PRO_1000212954" description="Large ribosomal subunit protein eL40">
    <location>
        <begin position="1"/>
        <end position="51"/>
    </location>
</feature>
<evidence type="ECO:0000255" key="1">
    <source>
        <dbReference type="HAMAP-Rule" id="MF_00788"/>
    </source>
</evidence>
<evidence type="ECO:0000305" key="2"/>
<name>RL40_THEGJ</name>
<gene>
    <name evidence="1" type="primary">rpl40e</name>
    <name type="ordered locus">TGAM_1958</name>
</gene>
<keyword id="KW-1185">Reference proteome</keyword>
<keyword id="KW-0687">Ribonucleoprotein</keyword>
<keyword id="KW-0689">Ribosomal protein</keyword>
<dbReference type="EMBL" id="CP001398">
    <property type="protein sequence ID" value="ACS34460.1"/>
    <property type="molecule type" value="Genomic_DNA"/>
</dbReference>
<dbReference type="RefSeq" id="WP_014122450.1">
    <property type="nucleotide sequence ID" value="NC_012804.1"/>
</dbReference>
<dbReference type="SMR" id="C5A241"/>
<dbReference type="STRING" id="593117.TGAM_1958"/>
<dbReference type="PaxDb" id="593117-TGAM_1958"/>
<dbReference type="KEGG" id="tga:TGAM_1958"/>
<dbReference type="PATRIC" id="fig|593117.10.peg.1968"/>
<dbReference type="eggNOG" id="arCOG04049">
    <property type="taxonomic scope" value="Archaea"/>
</dbReference>
<dbReference type="HOGENOM" id="CLU_205640_0_0_2"/>
<dbReference type="OrthoDB" id="45138at2157"/>
<dbReference type="Proteomes" id="UP000001488">
    <property type="component" value="Chromosome"/>
</dbReference>
<dbReference type="GO" id="GO:1990904">
    <property type="term" value="C:ribonucleoprotein complex"/>
    <property type="evidence" value="ECO:0007669"/>
    <property type="project" value="UniProtKB-KW"/>
</dbReference>
<dbReference type="GO" id="GO:0005840">
    <property type="term" value="C:ribosome"/>
    <property type="evidence" value="ECO:0007669"/>
    <property type="project" value="UniProtKB-KW"/>
</dbReference>
<dbReference type="GO" id="GO:0003735">
    <property type="term" value="F:structural constituent of ribosome"/>
    <property type="evidence" value="ECO:0007669"/>
    <property type="project" value="InterPro"/>
</dbReference>
<dbReference type="GO" id="GO:0006412">
    <property type="term" value="P:translation"/>
    <property type="evidence" value="ECO:0007669"/>
    <property type="project" value="UniProtKB-UniRule"/>
</dbReference>
<dbReference type="Gene3D" id="4.10.1060.50">
    <property type="match status" value="1"/>
</dbReference>
<dbReference type="HAMAP" id="MF_00788">
    <property type="entry name" value="Ribosomal_eL40"/>
    <property type="match status" value="1"/>
</dbReference>
<dbReference type="InterPro" id="IPR023657">
    <property type="entry name" value="Ribosomal_eL40_arc"/>
</dbReference>
<dbReference type="InterPro" id="IPR001975">
    <property type="entry name" value="Ribosomal_eL40_dom"/>
</dbReference>
<dbReference type="InterPro" id="IPR038587">
    <property type="entry name" value="Ribosomal_eL40_sf"/>
</dbReference>
<dbReference type="InterPro" id="IPR011332">
    <property type="entry name" value="Ribosomal_zn-bd"/>
</dbReference>
<dbReference type="NCBIfam" id="NF003161">
    <property type="entry name" value="PRK04136.1"/>
    <property type="match status" value="1"/>
</dbReference>
<dbReference type="PANTHER" id="PTHR39649">
    <property type="entry name" value="50S RIBOSOMAL PROTEIN L40E"/>
    <property type="match status" value="1"/>
</dbReference>
<dbReference type="PANTHER" id="PTHR39649:SF1">
    <property type="entry name" value="LARGE RIBOSOMAL SUBUNIT PROTEIN EL40"/>
    <property type="match status" value="1"/>
</dbReference>
<dbReference type="SMART" id="SM01377">
    <property type="entry name" value="Ribosomal_L40e"/>
    <property type="match status" value="1"/>
</dbReference>
<dbReference type="SUPFAM" id="SSF57829">
    <property type="entry name" value="Zn-binding ribosomal proteins"/>
    <property type="match status" value="1"/>
</dbReference>
<reference key="1">
    <citation type="journal article" date="2007" name="Genome Biol.">
        <title>Genome analysis and genome-wide proteomics of Thermococcus gammatolerans, the most radioresistant organism known amongst the Archaea.</title>
        <authorList>
            <person name="Zivanovic Y."/>
            <person name="Armengaud J."/>
            <person name="Lagorce A."/>
            <person name="Leplat C."/>
            <person name="Guerin P."/>
            <person name="Dutertre M."/>
            <person name="Anthouard V."/>
            <person name="Forterre P."/>
            <person name="Wincker P."/>
            <person name="Confalonieri F."/>
        </authorList>
    </citation>
    <scope>NUCLEOTIDE SEQUENCE [LARGE SCALE GENOMIC DNA]</scope>
    <source>
        <strain>DSM 15229 / JCM 11827 / EJ3</strain>
    </source>
</reference>
<protein>
    <recommendedName>
        <fullName evidence="1">Large ribosomal subunit protein eL40</fullName>
    </recommendedName>
    <alternativeName>
        <fullName evidence="2">50S ribosomal protein L40e</fullName>
    </alternativeName>
</protein>
<sequence length="51" mass="5781">MARFPEAEARIFRKLICMRCGATNPWGAKKCRKCGYKGLRPKAREPRGGGR</sequence>
<comment type="similarity">
    <text evidence="1">Belongs to the eukaryotic ribosomal protein eL40 family.</text>
</comment>
<organism>
    <name type="scientific">Thermococcus gammatolerans (strain DSM 15229 / JCM 11827 / EJ3)</name>
    <dbReference type="NCBI Taxonomy" id="593117"/>
    <lineage>
        <taxon>Archaea</taxon>
        <taxon>Methanobacteriati</taxon>
        <taxon>Methanobacteriota</taxon>
        <taxon>Thermococci</taxon>
        <taxon>Thermococcales</taxon>
        <taxon>Thermococcaceae</taxon>
        <taxon>Thermococcus</taxon>
    </lineage>
</organism>